<organism>
    <name type="scientific">Mus musculus</name>
    <name type="common">Mouse</name>
    <dbReference type="NCBI Taxonomy" id="10090"/>
    <lineage>
        <taxon>Eukaryota</taxon>
        <taxon>Metazoa</taxon>
        <taxon>Chordata</taxon>
        <taxon>Craniata</taxon>
        <taxon>Vertebrata</taxon>
        <taxon>Euteleostomi</taxon>
        <taxon>Mammalia</taxon>
        <taxon>Eutheria</taxon>
        <taxon>Euarchontoglires</taxon>
        <taxon>Glires</taxon>
        <taxon>Rodentia</taxon>
        <taxon>Myomorpha</taxon>
        <taxon>Muroidea</taxon>
        <taxon>Muridae</taxon>
        <taxon>Murinae</taxon>
        <taxon>Mus</taxon>
        <taxon>Mus</taxon>
    </lineage>
</organism>
<feature type="chain" id="PRO_0000347332" description="Gasdermin-C3">
    <location>
        <begin position="1"/>
        <end position="480"/>
    </location>
</feature>
<feature type="chain" id="PRO_0000451680" description="Gasdermin-C3, N-terminal" evidence="4">
    <location>
        <begin position="1"/>
        <end status="unknown"/>
    </location>
</feature>
<feature type="chain" id="PRO_0000451681" description="Gasdermin-C3, C-terminal" evidence="4">
    <location>
        <begin status="unknown"/>
        <end position="480"/>
    </location>
</feature>
<feature type="region of interest" description="Triggers pyroptosis" evidence="2">
    <location>
        <begin position="1"/>
        <end position="226"/>
    </location>
</feature>
<feature type="sequence conflict" description="In Ref. 1; BAC29694." evidence="4" ref="1">
    <original>P</original>
    <variation>T</variation>
    <location>
        <position position="383"/>
    </location>
</feature>
<accession>Q8CB12</accession>
<accession>E9QJY6</accession>
<proteinExistence type="evidence at transcript level"/>
<comment type="function">
    <molecule>Gasdermin-C3</molecule>
    <text evidence="2">This form constitutes the precursor of the pore-forming protein: upon cleavage, the released N-terminal moiety (Gasdermin-C3, N-terminal) binds to membranes and forms pores, triggering pyroptosis.</text>
</comment>
<comment type="function">
    <molecule>Gasdermin-C3, N-terminal</molecule>
    <text evidence="2">Pore-forming protein that causes membrane permeabilization and pyroptosis. Produced by the cleavage of gasdermin-C3 by caspase CASP8 in response to death signals (By similarity). After cleavage, moves to the plasma membrane where it strongly binds to membrane inner leaflet lipids. Homooligomerizes within the membrane and forms pores of 10-15 nanometers (nm) of inner diameter, triggering pyroptosis (By similarity).</text>
</comment>
<comment type="activity regulation">
    <molecule>Gasdermin-C3</molecule>
    <text evidence="2">The full-length protein before cleavage is inactive: intramolecular interactions between N- and C-terminal domains mediate autoinhibition in the absence of activation signal (By similarity). The intrinsic pyroptosis-inducing activity is carried by the released N-terminal moiety (Gasdermin-C3, N-terminal) following cleavage by caspase CASP8 (By similarity).</text>
</comment>
<comment type="subunit">
    <molecule>Gasdermin-C3, N-terminal</molecule>
    <text evidence="1">Homooligomer; homooligomeric ring-shaped pore complex containing 27-28 subunits when inserted in the membrane.</text>
</comment>
<comment type="subcellular location">
    <molecule>Gasdermin-C3</molecule>
    <subcellularLocation>
        <location evidence="2">Cytoplasm</location>
        <location evidence="2">Cytosol</location>
    </subcellularLocation>
</comment>
<comment type="subcellular location">
    <molecule>Gasdermin-C3, N-terminal</molecule>
    <subcellularLocation>
        <location evidence="1">Cell membrane</location>
        <topology evidence="1">Multi-pass membrane protein</topology>
    </subcellularLocation>
</comment>
<comment type="domain">
    <text evidence="1">Intramolecular interactions between N- and C-terminal domains are important for autoinhibition in the absence of activation signal. The intrinsic pyroptosis-inducing activity is carried by the N-terminal domain.</text>
</comment>
<comment type="PTM">
    <text evidence="2">Cleavage by CASP8 relieves autoinhibition by releasing the N-terminal moiety (Gasdermin-C3, N-terminal) that initiates pyroptosis.</text>
</comment>
<comment type="PTM">
    <text evidence="2">Palmitoylated.</text>
</comment>
<comment type="similarity">
    <text evidence="4">Belongs to the gasdermin family.</text>
</comment>
<dbReference type="EMBL" id="AK037079">
    <property type="protein sequence ID" value="BAC29694.1"/>
    <property type="molecule type" value="mRNA"/>
</dbReference>
<dbReference type="EMBL" id="AC140673">
    <property type="status" value="NOT_ANNOTATED_CDS"/>
    <property type="molecule type" value="Genomic_DNA"/>
</dbReference>
<dbReference type="CCDS" id="CCDS37088.1"/>
<dbReference type="RefSeq" id="NP_899017.2">
    <property type="nucleotide sequence ID" value="NM_183194.3"/>
</dbReference>
<dbReference type="RefSeq" id="XP_006521088.1">
    <property type="nucleotide sequence ID" value="XM_006521025.4"/>
</dbReference>
<dbReference type="RefSeq" id="XP_011243950.1">
    <property type="nucleotide sequence ID" value="XM_011245648.3"/>
</dbReference>
<dbReference type="RefSeq" id="XP_017172127.1">
    <property type="nucleotide sequence ID" value="XM_017316638.2"/>
</dbReference>
<dbReference type="RefSeq" id="XP_017172128.1">
    <property type="nucleotide sequence ID" value="XM_017316639.2"/>
</dbReference>
<dbReference type="RefSeq" id="XP_017172129.1">
    <property type="nucleotide sequence ID" value="XM_017316640.2"/>
</dbReference>
<dbReference type="RefSeq" id="XP_017172130.1">
    <property type="nucleotide sequence ID" value="XM_017316641.2"/>
</dbReference>
<dbReference type="RefSeq" id="XP_017172131.1">
    <property type="nucleotide sequence ID" value="XM_017316642.2"/>
</dbReference>
<dbReference type="RefSeq" id="XP_017172132.1">
    <property type="nucleotide sequence ID" value="XM_017316643.2"/>
</dbReference>
<dbReference type="RefSeq" id="XP_017172133.1">
    <property type="nucleotide sequence ID" value="XM_017316644.2"/>
</dbReference>
<dbReference type="RefSeq" id="XP_017172134.1">
    <property type="nucleotide sequence ID" value="XM_017316645.2"/>
</dbReference>
<dbReference type="RefSeq" id="XP_017172135.1">
    <property type="nucleotide sequence ID" value="XM_017316646.2"/>
</dbReference>
<dbReference type="RefSeq" id="XP_017172136.1">
    <property type="nucleotide sequence ID" value="XM_017316647.2"/>
</dbReference>
<dbReference type="RefSeq" id="XP_017172137.1">
    <property type="nucleotide sequence ID" value="XM_017316648.2"/>
</dbReference>
<dbReference type="RefSeq" id="XP_017172138.1">
    <property type="nucleotide sequence ID" value="XM_017316649.2"/>
</dbReference>
<dbReference type="RefSeq" id="XP_017172139.1">
    <property type="nucleotide sequence ID" value="XM_017316650.2"/>
</dbReference>
<dbReference type="RefSeq" id="XP_017172140.1">
    <property type="nucleotide sequence ID" value="XM_017316651.2"/>
</dbReference>
<dbReference type="RefSeq" id="XP_017172141.1">
    <property type="nucleotide sequence ID" value="XM_017316652.2"/>
</dbReference>
<dbReference type="RefSeq" id="XP_017172142.1">
    <property type="nucleotide sequence ID" value="XM_017316653.2"/>
</dbReference>
<dbReference type="SMR" id="Q8CB12"/>
<dbReference type="FunCoup" id="Q8CB12">
    <property type="interactions" value="141"/>
</dbReference>
<dbReference type="STRING" id="10090.ENSMUSP00000140272"/>
<dbReference type="iPTMnet" id="Q8CB12"/>
<dbReference type="PhosphoSitePlus" id="Q8CB12"/>
<dbReference type="PaxDb" id="10090-ENSMUSP00000140272"/>
<dbReference type="ProteomicsDB" id="271466"/>
<dbReference type="DNASU" id="270328"/>
<dbReference type="Ensembl" id="ENSMUST00000089894.6">
    <property type="protein sequence ID" value="ENSMUSP00000087339.6"/>
    <property type="gene ID" value="ENSMUSG00000055827.14"/>
</dbReference>
<dbReference type="Ensembl" id="ENSMUST00000185526.7">
    <property type="protein sequence ID" value="ENSMUSP00000140272.2"/>
    <property type="gene ID" value="ENSMUSG00000055827.14"/>
</dbReference>
<dbReference type="Ensembl" id="ENSMUST00000190682.7">
    <property type="protein sequence ID" value="ENSMUSP00000139472.2"/>
    <property type="gene ID" value="ENSMUSG00000055827.14"/>
</dbReference>
<dbReference type="GeneID" id="270328"/>
<dbReference type="KEGG" id="mmu:270328"/>
<dbReference type="UCSC" id="uc007vza.2">
    <property type="organism name" value="mouse"/>
</dbReference>
<dbReference type="AGR" id="MGI:3580656"/>
<dbReference type="CTD" id="270328"/>
<dbReference type="MGI" id="MGI:3580656">
    <property type="gene designation" value="Gsdmc3"/>
</dbReference>
<dbReference type="VEuPathDB" id="HostDB:ENSMUSG00000055827"/>
<dbReference type="eggNOG" id="ENOG502S0IQ">
    <property type="taxonomic scope" value="Eukaryota"/>
</dbReference>
<dbReference type="GeneTree" id="ENSGT00950000183140"/>
<dbReference type="HOGENOM" id="CLU_040752_2_0_1"/>
<dbReference type="InParanoid" id="Q8CB12"/>
<dbReference type="OMA" id="CYPEVGS"/>
<dbReference type="OrthoDB" id="9836623at2759"/>
<dbReference type="PhylomeDB" id="Q8CB12"/>
<dbReference type="TreeFam" id="TF331886"/>
<dbReference type="BioGRID-ORCS" id="270328">
    <property type="hits" value="1 hit in 55 CRISPR screens"/>
</dbReference>
<dbReference type="ChiTaRS" id="Gsdmc3">
    <property type="organism name" value="mouse"/>
</dbReference>
<dbReference type="PRO" id="PR:Q8CB12"/>
<dbReference type="Proteomes" id="UP000000589">
    <property type="component" value="Chromosome 15"/>
</dbReference>
<dbReference type="RNAct" id="Q8CB12">
    <property type="molecule type" value="protein"/>
</dbReference>
<dbReference type="Bgee" id="ENSMUSG00000055827">
    <property type="expression patterns" value="Expressed in ileum and 24 other cell types or tissues"/>
</dbReference>
<dbReference type="GO" id="GO:0005829">
    <property type="term" value="C:cytosol"/>
    <property type="evidence" value="ECO:0007669"/>
    <property type="project" value="UniProtKB-SubCell"/>
</dbReference>
<dbReference type="GO" id="GO:0005886">
    <property type="term" value="C:plasma membrane"/>
    <property type="evidence" value="ECO:0007669"/>
    <property type="project" value="UniProtKB-SubCell"/>
</dbReference>
<dbReference type="GO" id="GO:0012501">
    <property type="term" value="P:programmed cell death"/>
    <property type="evidence" value="ECO:0007669"/>
    <property type="project" value="UniProtKB-KW"/>
</dbReference>
<dbReference type="InterPro" id="IPR007677">
    <property type="entry name" value="Gasdermin"/>
</dbReference>
<dbReference type="InterPro" id="IPR040460">
    <property type="entry name" value="Gasdermin_pore"/>
</dbReference>
<dbReference type="InterPro" id="IPR041263">
    <property type="entry name" value="Gasdermin_PUB"/>
</dbReference>
<dbReference type="PANTHER" id="PTHR16399">
    <property type="entry name" value="GASDERMIN"/>
    <property type="match status" value="1"/>
</dbReference>
<dbReference type="PANTHER" id="PTHR16399:SF21">
    <property type="entry name" value="GASDERMIN-C"/>
    <property type="match status" value="1"/>
</dbReference>
<dbReference type="Pfam" id="PF04598">
    <property type="entry name" value="Gasdermin"/>
    <property type="match status" value="1"/>
</dbReference>
<dbReference type="Pfam" id="PF17708">
    <property type="entry name" value="Gasdermin_C"/>
    <property type="match status" value="1"/>
</dbReference>
<name>GSDC3_MOUSE</name>
<keyword id="KW-1003">Cell membrane</keyword>
<keyword id="KW-0963">Cytoplasm</keyword>
<keyword id="KW-0449">Lipoprotein</keyword>
<keyword id="KW-0472">Membrane</keyword>
<keyword id="KW-1210">Necrosis</keyword>
<keyword id="KW-0564">Palmitate</keyword>
<keyword id="KW-1185">Reference proteome</keyword>
<keyword id="KW-0812">Transmembrane</keyword>
<keyword id="KW-1134">Transmembrane beta strand</keyword>
<evidence type="ECO:0000250" key="1">
    <source>
        <dbReference type="UniProtKB" id="Q5Y4Y6"/>
    </source>
</evidence>
<evidence type="ECO:0000250" key="2">
    <source>
        <dbReference type="UniProtKB" id="Q9BYG8"/>
    </source>
</evidence>
<evidence type="ECO:0000303" key="3">
    <source>
    </source>
</evidence>
<evidence type="ECO:0000305" key="4"/>
<evidence type="ECO:0000312" key="5">
    <source>
        <dbReference type="EMBL" id="BAC29694.1"/>
    </source>
</evidence>
<evidence type="ECO:0000312" key="6">
    <source>
        <dbReference type="MGI" id="MGI:3580656"/>
    </source>
</evidence>
<gene>
    <name evidence="3 6" type="primary">Gsdmc3</name>
</gene>
<protein>
    <recommendedName>
        <fullName evidence="3">Gasdermin-C3</fullName>
    </recommendedName>
    <component>
        <recommendedName>
            <fullName evidence="4">Gasdermin-C3, N-terminal</fullName>
            <shortName evidence="4">GSDMC3-NT</shortName>
        </recommendedName>
    </component>
    <component>
        <recommendedName>
            <fullName evidence="4">Gasdermin-C3, C-terminal</fullName>
            <shortName evidence="4">GSDMC3-CT</shortName>
        </recommendedName>
    </component>
</protein>
<reference evidence="5" key="1">
    <citation type="journal article" date="2005" name="Science">
        <title>The transcriptional landscape of the mammalian genome.</title>
        <authorList>
            <person name="Carninci P."/>
            <person name="Kasukawa T."/>
            <person name="Katayama S."/>
            <person name="Gough J."/>
            <person name="Frith M.C."/>
            <person name="Maeda N."/>
            <person name="Oyama R."/>
            <person name="Ravasi T."/>
            <person name="Lenhard B."/>
            <person name="Wells C."/>
            <person name="Kodzius R."/>
            <person name="Shimokawa K."/>
            <person name="Bajic V.B."/>
            <person name="Brenner S.E."/>
            <person name="Batalov S."/>
            <person name="Forrest A.R."/>
            <person name="Zavolan M."/>
            <person name="Davis M.J."/>
            <person name="Wilming L.G."/>
            <person name="Aidinis V."/>
            <person name="Allen J.E."/>
            <person name="Ambesi-Impiombato A."/>
            <person name="Apweiler R."/>
            <person name="Aturaliya R.N."/>
            <person name="Bailey T.L."/>
            <person name="Bansal M."/>
            <person name="Baxter L."/>
            <person name="Beisel K.W."/>
            <person name="Bersano T."/>
            <person name="Bono H."/>
            <person name="Chalk A.M."/>
            <person name="Chiu K.P."/>
            <person name="Choudhary V."/>
            <person name="Christoffels A."/>
            <person name="Clutterbuck D.R."/>
            <person name="Crowe M.L."/>
            <person name="Dalla E."/>
            <person name="Dalrymple B.P."/>
            <person name="de Bono B."/>
            <person name="Della Gatta G."/>
            <person name="di Bernardo D."/>
            <person name="Down T."/>
            <person name="Engstrom P."/>
            <person name="Fagiolini M."/>
            <person name="Faulkner G."/>
            <person name="Fletcher C.F."/>
            <person name="Fukushima T."/>
            <person name="Furuno M."/>
            <person name="Futaki S."/>
            <person name="Gariboldi M."/>
            <person name="Georgii-Hemming P."/>
            <person name="Gingeras T.R."/>
            <person name="Gojobori T."/>
            <person name="Green R.E."/>
            <person name="Gustincich S."/>
            <person name="Harbers M."/>
            <person name="Hayashi Y."/>
            <person name="Hensch T.K."/>
            <person name="Hirokawa N."/>
            <person name="Hill D."/>
            <person name="Huminiecki L."/>
            <person name="Iacono M."/>
            <person name="Ikeo K."/>
            <person name="Iwama A."/>
            <person name="Ishikawa T."/>
            <person name="Jakt M."/>
            <person name="Kanapin A."/>
            <person name="Katoh M."/>
            <person name="Kawasawa Y."/>
            <person name="Kelso J."/>
            <person name="Kitamura H."/>
            <person name="Kitano H."/>
            <person name="Kollias G."/>
            <person name="Krishnan S.P."/>
            <person name="Kruger A."/>
            <person name="Kummerfeld S.K."/>
            <person name="Kurochkin I.V."/>
            <person name="Lareau L.F."/>
            <person name="Lazarevic D."/>
            <person name="Lipovich L."/>
            <person name="Liu J."/>
            <person name="Liuni S."/>
            <person name="McWilliam S."/>
            <person name="Madan Babu M."/>
            <person name="Madera M."/>
            <person name="Marchionni L."/>
            <person name="Matsuda H."/>
            <person name="Matsuzawa S."/>
            <person name="Miki H."/>
            <person name="Mignone F."/>
            <person name="Miyake S."/>
            <person name="Morris K."/>
            <person name="Mottagui-Tabar S."/>
            <person name="Mulder N."/>
            <person name="Nakano N."/>
            <person name="Nakauchi H."/>
            <person name="Ng P."/>
            <person name="Nilsson R."/>
            <person name="Nishiguchi S."/>
            <person name="Nishikawa S."/>
            <person name="Nori F."/>
            <person name="Ohara O."/>
            <person name="Okazaki Y."/>
            <person name="Orlando V."/>
            <person name="Pang K.C."/>
            <person name="Pavan W.J."/>
            <person name="Pavesi G."/>
            <person name="Pesole G."/>
            <person name="Petrovsky N."/>
            <person name="Piazza S."/>
            <person name="Reed J."/>
            <person name="Reid J.F."/>
            <person name="Ring B.Z."/>
            <person name="Ringwald M."/>
            <person name="Rost B."/>
            <person name="Ruan Y."/>
            <person name="Salzberg S.L."/>
            <person name="Sandelin A."/>
            <person name="Schneider C."/>
            <person name="Schoenbach C."/>
            <person name="Sekiguchi K."/>
            <person name="Semple C.A."/>
            <person name="Seno S."/>
            <person name="Sessa L."/>
            <person name="Sheng Y."/>
            <person name="Shibata Y."/>
            <person name="Shimada H."/>
            <person name="Shimada K."/>
            <person name="Silva D."/>
            <person name="Sinclair B."/>
            <person name="Sperling S."/>
            <person name="Stupka E."/>
            <person name="Sugiura K."/>
            <person name="Sultana R."/>
            <person name="Takenaka Y."/>
            <person name="Taki K."/>
            <person name="Tammoja K."/>
            <person name="Tan S.L."/>
            <person name="Tang S."/>
            <person name="Taylor M.S."/>
            <person name="Tegner J."/>
            <person name="Teichmann S.A."/>
            <person name="Ueda H.R."/>
            <person name="van Nimwegen E."/>
            <person name="Verardo R."/>
            <person name="Wei C.L."/>
            <person name="Yagi K."/>
            <person name="Yamanishi H."/>
            <person name="Zabarovsky E."/>
            <person name="Zhu S."/>
            <person name="Zimmer A."/>
            <person name="Hide W."/>
            <person name="Bult C."/>
            <person name="Grimmond S.M."/>
            <person name="Teasdale R.D."/>
            <person name="Liu E.T."/>
            <person name="Brusic V."/>
            <person name="Quackenbush J."/>
            <person name="Wahlestedt C."/>
            <person name="Mattick J.S."/>
            <person name="Hume D.A."/>
            <person name="Kai C."/>
            <person name="Sasaki D."/>
            <person name="Tomaru Y."/>
            <person name="Fukuda S."/>
            <person name="Kanamori-Katayama M."/>
            <person name="Suzuki M."/>
            <person name="Aoki J."/>
            <person name="Arakawa T."/>
            <person name="Iida J."/>
            <person name="Imamura K."/>
            <person name="Itoh M."/>
            <person name="Kato T."/>
            <person name="Kawaji H."/>
            <person name="Kawagashira N."/>
            <person name="Kawashima T."/>
            <person name="Kojima M."/>
            <person name="Kondo S."/>
            <person name="Konno H."/>
            <person name="Nakano K."/>
            <person name="Ninomiya N."/>
            <person name="Nishio T."/>
            <person name="Okada M."/>
            <person name="Plessy C."/>
            <person name="Shibata K."/>
            <person name="Shiraki T."/>
            <person name="Suzuki S."/>
            <person name="Tagami M."/>
            <person name="Waki K."/>
            <person name="Watahiki A."/>
            <person name="Okamura-Oho Y."/>
            <person name="Suzuki H."/>
            <person name="Kawai J."/>
            <person name="Hayashizaki Y."/>
        </authorList>
    </citation>
    <scope>NUCLEOTIDE SEQUENCE [LARGE SCALE MRNA]</scope>
    <source>
        <strain evidence="5">C57BL/6J</strain>
        <tissue evidence="5">Vagina</tissue>
    </source>
</reference>
<reference key="2">
    <citation type="journal article" date="2009" name="PLoS Biol.">
        <title>Lineage-specific biology revealed by a finished genome assembly of the mouse.</title>
        <authorList>
            <person name="Church D.M."/>
            <person name="Goodstadt L."/>
            <person name="Hillier L.W."/>
            <person name="Zody M.C."/>
            <person name="Goldstein S."/>
            <person name="She X."/>
            <person name="Bult C.J."/>
            <person name="Agarwala R."/>
            <person name="Cherry J.L."/>
            <person name="DiCuccio M."/>
            <person name="Hlavina W."/>
            <person name="Kapustin Y."/>
            <person name="Meric P."/>
            <person name="Maglott D."/>
            <person name="Birtle Z."/>
            <person name="Marques A.C."/>
            <person name="Graves T."/>
            <person name="Zhou S."/>
            <person name="Teague B."/>
            <person name="Potamousis K."/>
            <person name="Churas C."/>
            <person name="Place M."/>
            <person name="Herschleb J."/>
            <person name="Runnheim R."/>
            <person name="Forrest D."/>
            <person name="Amos-Landgraf J."/>
            <person name="Schwartz D.C."/>
            <person name="Cheng Z."/>
            <person name="Lindblad-Toh K."/>
            <person name="Eichler E.E."/>
            <person name="Ponting C.P."/>
        </authorList>
    </citation>
    <scope>NUCLEOTIDE SEQUENCE [LARGE SCALE GENOMIC DNA]</scope>
    <source>
        <strain>C57BL/6J</strain>
    </source>
</reference>
<reference evidence="4" key="3">
    <citation type="journal article" date="2007" name="Genomics">
        <title>Members of a novel gene family, Gsdm, are expressed exclusively in the epithelium of the skin and gastrointestinal tract in a highly tissue-specific manner.</title>
        <authorList>
            <person name="Tamura M."/>
            <person name="Tanaka S."/>
            <person name="Fujii T."/>
            <person name="Aoki A."/>
            <person name="Komiyama H."/>
            <person name="Ezawa K."/>
            <person name="Sumiyama K."/>
            <person name="Sagai T."/>
            <person name="Shiroishi T."/>
        </authorList>
    </citation>
    <scope>IDENTIFICATION</scope>
</reference>
<sequence length="480" mass="54188">MGYSFDRASKDVVKKLQGRDLRPVECLSDATKFRLFHILQETPRSGWETEDIPVGFTLLDLLEPNFPVPEPEVSAPKPFIHVQSTDLEANLNVADIARGGVGYVGYGGYNIEVQSTSIPNPKLEILQNRKLLDKLPTFMKFCRMERKNLYVVTEAYEVSKDTMLTGLSSVNLLVKGFFKQLFKVRGKAGRSEKYSIPIPKGSVLAYKKQQLVIENNTCVILPSATKKKMTFPGTPKYASASEPTEIYRTELQGLWINDIEPIGRIQEPAHLDFKCLQYEVSEQTRLLPELSKDVQEVVLSSFLSMLYEGDRNVLHDLMKMLELSQLGHMDGPGGKILDELRKDSSNPCVDLKDLILYLLQALMVLSDSQLNLLARSVEMRLLPHQVELVTSILQPNFKYPWNIPFTVQPQLLAPLQGEGLAITYELLEECGLKMELNNPRSTWDLEAKMPLSALYGSLSFLQQLQKANSSFKPSLRPGYI</sequence>